<gene>
    <name evidence="1" type="primary">hisA</name>
    <name type="ordered locus">EcHS_A2163</name>
</gene>
<keyword id="KW-0028">Amino-acid biosynthesis</keyword>
<keyword id="KW-0963">Cytoplasm</keyword>
<keyword id="KW-0368">Histidine biosynthesis</keyword>
<keyword id="KW-0413">Isomerase</keyword>
<comment type="catalytic activity">
    <reaction evidence="1">
        <text>1-(5-phospho-beta-D-ribosyl)-5-[(5-phospho-beta-D-ribosylamino)methylideneamino]imidazole-4-carboxamide = 5-[(5-phospho-1-deoxy-D-ribulos-1-ylimino)methylamino]-1-(5-phospho-beta-D-ribosyl)imidazole-4-carboxamide</text>
        <dbReference type="Rhea" id="RHEA:15469"/>
        <dbReference type="ChEBI" id="CHEBI:58435"/>
        <dbReference type="ChEBI" id="CHEBI:58525"/>
        <dbReference type="EC" id="5.3.1.16"/>
    </reaction>
</comment>
<comment type="pathway">
    <text evidence="1">Amino-acid biosynthesis; L-histidine biosynthesis; L-histidine from 5-phospho-alpha-D-ribose 1-diphosphate: step 4/9.</text>
</comment>
<comment type="subcellular location">
    <subcellularLocation>
        <location evidence="1">Cytoplasm</location>
    </subcellularLocation>
</comment>
<comment type="similarity">
    <text evidence="1">Belongs to the HisA/HisF family.</text>
</comment>
<organism>
    <name type="scientific">Escherichia coli O9:H4 (strain HS)</name>
    <dbReference type="NCBI Taxonomy" id="331112"/>
    <lineage>
        <taxon>Bacteria</taxon>
        <taxon>Pseudomonadati</taxon>
        <taxon>Pseudomonadota</taxon>
        <taxon>Gammaproteobacteria</taxon>
        <taxon>Enterobacterales</taxon>
        <taxon>Enterobacteriaceae</taxon>
        <taxon>Escherichia</taxon>
    </lineage>
</organism>
<dbReference type="EC" id="5.3.1.16" evidence="1"/>
<dbReference type="EMBL" id="CP000802">
    <property type="protein sequence ID" value="ABV06452.1"/>
    <property type="molecule type" value="Genomic_DNA"/>
</dbReference>
<dbReference type="RefSeq" id="WP_000586445.1">
    <property type="nucleotide sequence ID" value="NC_009800.1"/>
</dbReference>
<dbReference type="SMR" id="A8A1P8"/>
<dbReference type="KEGG" id="ecx:EcHS_A2163"/>
<dbReference type="HOGENOM" id="CLU_048577_1_2_6"/>
<dbReference type="UniPathway" id="UPA00031">
    <property type="reaction ID" value="UER00009"/>
</dbReference>
<dbReference type="GO" id="GO:0005737">
    <property type="term" value="C:cytoplasm"/>
    <property type="evidence" value="ECO:0007669"/>
    <property type="project" value="UniProtKB-SubCell"/>
</dbReference>
<dbReference type="GO" id="GO:0003949">
    <property type="term" value="F:1-(5-phosphoribosyl)-5-[(5-phosphoribosylamino)methylideneamino]imidazole-4-carboxamide isomerase activity"/>
    <property type="evidence" value="ECO:0007669"/>
    <property type="project" value="UniProtKB-UniRule"/>
</dbReference>
<dbReference type="GO" id="GO:0000105">
    <property type="term" value="P:L-histidine biosynthetic process"/>
    <property type="evidence" value="ECO:0007669"/>
    <property type="project" value="UniProtKB-UniRule"/>
</dbReference>
<dbReference type="GO" id="GO:0000162">
    <property type="term" value="P:L-tryptophan biosynthetic process"/>
    <property type="evidence" value="ECO:0007669"/>
    <property type="project" value="TreeGrafter"/>
</dbReference>
<dbReference type="CDD" id="cd04732">
    <property type="entry name" value="HisA"/>
    <property type="match status" value="1"/>
</dbReference>
<dbReference type="FunFam" id="3.20.20.70:FF:000009">
    <property type="entry name" value="1-(5-phosphoribosyl)-5-[(5-phosphoribosylamino)methylideneamino] imidazole-4-carboxamide isomerase"/>
    <property type="match status" value="1"/>
</dbReference>
<dbReference type="Gene3D" id="3.20.20.70">
    <property type="entry name" value="Aldolase class I"/>
    <property type="match status" value="1"/>
</dbReference>
<dbReference type="HAMAP" id="MF_01014">
    <property type="entry name" value="HisA"/>
    <property type="match status" value="1"/>
</dbReference>
<dbReference type="InterPro" id="IPR013785">
    <property type="entry name" value="Aldolase_TIM"/>
</dbReference>
<dbReference type="InterPro" id="IPR006062">
    <property type="entry name" value="His_biosynth"/>
</dbReference>
<dbReference type="InterPro" id="IPR006063">
    <property type="entry name" value="HisA_bact_arch"/>
</dbReference>
<dbReference type="InterPro" id="IPR044524">
    <property type="entry name" value="Isoase_HisA-like"/>
</dbReference>
<dbReference type="InterPro" id="IPR023016">
    <property type="entry name" value="Isoase_HisA-like_bact"/>
</dbReference>
<dbReference type="InterPro" id="IPR011060">
    <property type="entry name" value="RibuloseP-bd_barrel"/>
</dbReference>
<dbReference type="NCBIfam" id="TIGR00007">
    <property type="entry name" value="1-(5-phosphoribosyl)-5-[(5-phosphoribosylamino)methylideneamino]imidazole-4-carboxamide isomerase"/>
    <property type="match status" value="1"/>
</dbReference>
<dbReference type="PANTHER" id="PTHR43090">
    <property type="entry name" value="1-(5-PHOSPHORIBOSYL)-5-[(5-PHOSPHORIBOSYLAMINO)METHYLIDENEAMINO] IMIDAZOLE-4-CARBOXAMIDE ISOMERASE"/>
    <property type="match status" value="1"/>
</dbReference>
<dbReference type="PANTHER" id="PTHR43090:SF2">
    <property type="entry name" value="1-(5-PHOSPHORIBOSYL)-5-[(5-PHOSPHORIBOSYLAMINO)METHYLIDENEAMINO] IMIDAZOLE-4-CARBOXAMIDE ISOMERASE"/>
    <property type="match status" value="1"/>
</dbReference>
<dbReference type="Pfam" id="PF00977">
    <property type="entry name" value="His_biosynth"/>
    <property type="match status" value="1"/>
</dbReference>
<dbReference type="SUPFAM" id="SSF51366">
    <property type="entry name" value="Ribulose-phoshate binding barrel"/>
    <property type="match status" value="1"/>
</dbReference>
<protein>
    <recommendedName>
        <fullName evidence="1">1-(5-phosphoribosyl)-5-[(5-phosphoribosylamino)methylideneamino] imidazole-4-carboxamide isomerase</fullName>
        <ecNumber evidence="1">5.3.1.16</ecNumber>
    </recommendedName>
    <alternativeName>
        <fullName evidence="1">Phosphoribosylformimino-5-aminoimidazole carboxamide ribotide isomerase</fullName>
    </alternativeName>
</protein>
<feature type="chain" id="PRO_1000063205" description="1-(5-phosphoribosyl)-5-[(5-phosphoribosylamino)methylideneamino] imidazole-4-carboxamide isomerase">
    <location>
        <begin position="1"/>
        <end position="245"/>
    </location>
</feature>
<feature type="active site" description="Proton acceptor" evidence="1">
    <location>
        <position position="7"/>
    </location>
</feature>
<feature type="active site" description="Proton donor" evidence="1">
    <location>
        <position position="129"/>
    </location>
</feature>
<proteinExistence type="inferred from homology"/>
<sequence length="245" mass="26016">MIIPALDLIDGTVVRLHQGDYGKQRDYGNDPLPRLQDYAAQGAEVLHLVDLTGAKDPAKRQIPLIKTLVAGVNVPVQVGGGVRSEEDVAALLEAGVARVVVGSTAVKSPEMVKGWFERFGADALVLALDVRIDEQGNKQVAVSGWQENSGVSLEQLVETYLPVGLKHVLCTDISRDGTLAGSNVSLYEEVCARYPQVAFQSSGGIGDIDDVAALRGTGVRGVIVGRALLEGKFTVKEAIACWQNA</sequence>
<reference key="1">
    <citation type="journal article" date="2008" name="J. Bacteriol.">
        <title>The pangenome structure of Escherichia coli: comparative genomic analysis of E. coli commensal and pathogenic isolates.</title>
        <authorList>
            <person name="Rasko D.A."/>
            <person name="Rosovitz M.J."/>
            <person name="Myers G.S.A."/>
            <person name="Mongodin E.F."/>
            <person name="Fricke W.F."/>
            <person name="Gajer P."/>
            <person name="Crabtree J."/>
            <person name="Sebaihia M."/>
            <person name="Thomson N.R."/>
            <person name="Chaudhuri R."/>
            <person name="Henderson I.R."/>
            <person name="Sperandio V."/>
            <person name="Ravel J."/>
        </authorList>
    </citation>
    <scope>NUCLEOTIDE SEQUENCE [LARGE SCALE GENOMIC DNA]</scope>
    <source>
        <strain>HS</strain>
    </source>
</reference>
<accession>A8A1P8</accession>
<evidence type="ECO:0000255" key="1">
    <source>
        <dbReference type="HAMAP-Rule" id="MF_01014"/>
    </source>
</evidence>
<name>HIS4_ECOHS</name>